<feature type="signal peptide" evidence="1">
    <location>
        <begin position="1"/>
        <end position="25"/>
    </location>
</feature>
<feature type="chain" id="PRO_0000037453" description="Uncharacterized protein UL20">
    <location>
        <begin position="26"/>
        <end position="340"/>
    </location>
</feature>
<feature type="topological domain" description="Lumenal" evidence="1">
    <location>
        <begin position="26"/>
        <end position="225"/>
    </location>
</feature>
<feature type="transmembrane region" description="Helical" evidence="1">
    <location>
        <begin position="226"/>
        <end position="246"/>
    </location>
</feature>
<feature type="topological domain" description="Cytoplasmic" evidence="1">
    <location>
        <begin position="247"/>
        <end position="340"/>
    </location>
</feature>
<feature type="glycosylation site" description="N-linked (GlcNAc...) asparagine; by host" evidence="1">
    <location>
        <position position="27"/>
    </location>
</feature>
<feature type="glycosylation site" description="N-linked (GlcNAc...) asparagine; by host" evidence="1">
    <location>
        <position position="54"/>
    </location>
</feature>
<feature type="glycosylation site" description="N-linked (GlcNAc...) asparagine; by host" evidence="1">
    <location>
        <position position="57"/>
    </location>
</feature>
<feature type="glycosylation site" description="N-linked (GlcNAc...) asparagine; by host" evidence="1">
    <location>
        <position position="68"/>
    </location>
</feature>
<feature type="glycosylation site" description="N-linked (GlcNAc...) asparagine; by host" evidence="1">
    <location>
        <position position="72"/>
    </location>
</feature>
<feature type="glycosylation site" description="N-linked (GlcNAc...) asparagine; by host" evidence="1">
    <location>
        <position position="78"/>
    </location>
</feature>
<feature type="glycosylation site" description="N-linked (GlcNAc...) asparagine; by host" evidence="1">
    <location>
        <position position="83"/>
    </location>
</feature>
<feature type="glycosylation site" description="N-linked (GlcNAc...) asparagine; by host" evidence="1">
    <location>
        <position position="107"/>
    </location>
</feature>
<feature type="glycosylation site" description="N-linked (GlcNAc...) asparagine; by host" evidence="1">
    <location>
        <position position="118"/>
    </location>
</feature>
<feature type="glycosylation site" description="N-linked (GlcNAc...) asparagine; by host" evidence="1">
    <location>
        <position position="146"/>
    </location>
</feature>
<feature type="glycosylation site" description="N-linked (GlcNAc...) asparagine; by host" evidence="1">
    <location>
        <position position="173"/>
    </location>
</feature>
<feature type="glycosylation site" description="N-linked (GlcNAc...) asparagine; by host" evidence="1">
    <location>
        <position position="180"/>
    </location>
</feature>
<organism>
    <name type="scientific">Human cytomegalovirus (strain AD169)</name>
    <name type="common">HHV-5</name>
    <name type="synonym">Human herpesvirus 5</name>
    <dbReference type="NCBI Taxonomy" id="10360"/>
    <lineage>
        <taxon>Viruses</taxon>
        <taxon>Duplodnaviria</taxon>
        <taxon>Heunggongvirae</taxon>
        <taxon>Peploviricota</taxon>
        <taxon>Herviviricetes</taxon>
        <taxon>Herpesvirales</taxon>
        <taxon>Orthoherpesviridae</taxon>
        <taxon>Betaherpesvirinae</taxon>
        <taxon>Cytomegalovirus</taxon>
        <taxon>Cytomegalovirus humanbeta5</taxon>
        <taxon>Human cytomegalovirus</taxon>
    </lineage>
</organism>
<sequence>MLGIRAMLVMLDYYWIQLITNNDTRSNNTDTIFVSLLTGANGVTRTAIGGLHSNYTNLTEAFRFTPANTTTNSSTEGNWSVTNLTESCINRGESYLTTIWLLNCADNNTYWYSGNAYNHTIDTCKNTVSGYLFFGMCQLWKDWVTNASHDTVRIQSLGNEIRCMLLPRQYTLNATVEWYNKSEGDVPEEFMDYVILTPLAVLTCGLQEAYILDKGRRYMYLFSVSCAGITGTVSIILVSLSLLILICYYRCGRLLICPRGFELLPEFTEEEEEKEKLLTYKDIEVQVPIRTRRLLVPWIRESKMWVLPPPLPPRPPHLIEFPPSPPPSPGPMHMVVCMPA</sequence>
<protein>
    <recommendedName>
        <fullName>Uncharacterized protein UL20</fullName>
    </recommendedName>
</protein>
<name>UL20_HCMVA</name>
<evidence type="ECO:0000255" key="1"/>
<evidence type="ECO:0000305" key="2"/>
<evidence type="ECO:0000305" key="3">
    <source>
    </source>
</evidence>
<organismHost>
    <name type="scientific">Homo sapiens</name>
    <name type="common">Human</name>
    <dbReference type="NCBI Taxonomy" id="9606"/>
</organismHost>
<proteinExistence type="inferred from homology"/>
<gene>
    <name type="primary">UL20</name>
</gene>
<comment type="subcellular location">
    <subcellularLocation>
        <location evidence="3">Host endoplasmic reticulum membrane</location>
        <topology evidence="3">Single-pass type I membrane protein</topology>
    </subcellularLocation>
    <text>Does not reach the host cell surface but is rapidely targeted to endosomes and lysosomes.</text>
</comment>
<comment type="similarity">
    <text evidence="2">Belongs to the HHV-5 UL20 protein family.</text>
</comment>
<dbReference type="EMBL" id="X17403">
    <property type="protein sequence ID" value="CAA35419.1"/>
    <property type="molecule type" value="Genomic_DNA"/>
</dbReference>
<dbReference type="EMBL" id="BK000394">
    <property type="protein sequence ID" value="DAA00124.1"/>
    <property type="molecule type" value="Genomic_DNA"/>
</dbReference>
<dbReference type="PIR" id="S09783">
    <property type="entry name" value="QQBES6"/>
</dbReference>
<dbReference type="GlyCosmos" id="P16758">
    <property type="glycosylation" value="12 sites, No reported glycans"/>
</dbReference>
<dbReference type="Proteomes" id="UP000008991">
    <property type="component" value="Segment"/>
</dbReference>
<dbReference type="Proteomes" id="UP000008992">
    <property type="component" value="Segment"/>
</dbReference>
<dbReference type="GO" id="GO:0044167">
    <property type="term" value="C:host cell endoplasmic reticulum membrane"/>
    <property type="evidence" value="ECO:0007669"/>
    <property type="project" value="UniProtKB-SubCell"/>
</dbReference>
<dbReference type="GO" id="GO:0016020">
    <property type="term" value="C:membrane"/>
    <property type="evidence" value="ECO:0007669"/>
    <property type="project" value="UniProtKB-KW"/>
</dbReference>
<dbReference type="InterPro" id="IPR035142">
    <property type="entry name" value="UL20"/>
</dbReference>
<dbReference type="Pfam" id="PF17582">
    <property type="entry name" value="UL20"/>
    <property type="match status" value="1"/>
</dbReference>
<reference key="1">
    <citation type="journal article" date="1990" name="Curr. Top. Microbiol. Immunol.">
        <title>Analysis of the protein-coding content of the sequence of human cytomegalovirus strain AD169.</title>
        <authorList>
            <person name="Chee M.S."/>
            <person name="Bankier A.T."/>
            <person name="Beck S."/>
            <person name="Bohni R."/>
            <person name="Brown C.M."/>
            <person name="Cerny R."/>
            <person name="Horsnell T."/>
            <person name="Hutchison C.A. III"/>
            <person name="Kouzarides T."/>
            <person name="Martignetti J.A."/>
            <person name="Preddie E."/>
            <person name="Satchwell S.C."/>
            <person name="Tomlinson P."/>
            <person name="Weston K.M."/>
            <person name="Barrell B.G."/>
        </authorList>
    </citation>
    <scope>NUCLEOTIDE SEQUENCE [LARGE SCALE GENOMIC DNA]</scope>
</reference>
<reference key="2">
    <citation type="journal article" date="2003" name="J. Gen. Virol.">
        <title>The human cytomegalovirus genome revisited: comparison with the chimpanzee cytomegalovirus genome.</title>
        <authorList>
            <person name="Davison A.J."/>
            <person name="Dolan A."/>
            <person name="Akter P."/>
            <person name="Addison C."/>
            <person name="Dargan D.J."/>
            <person name="Alcendor D.J."/>
            <person name="McGeoch D.J."/>
            <person name="Hayward G.S."/>
        </authorList>
    </citation>
    <scope>GENOME REANNOTATION</scope>
</reference>
<reference key="3">
    <citation type="journal article" date="2003" name="J. Gen. Virol.">
        <authorList>
            <person name="Davison A.J."/>
            <person name="Dolan A."/>
            <person name="Akter P."/>
            <person name="Addison C."/>
            <person name="Dargan D.J."/>
            <person name="Alcendor D.J."/>
            <person name="McGeoch D.J."/>
            <person name="Hayward G.S."/>
        </authorList>
    </citation>
    <scope>ERRATUM OF PUBMED:12533697</scope>
</reference>
<reference key="4">
    <citation type="journal article" date="2011" name="Traffic">
        <title>The polymorphic HCMV glycoprotein UL20 is targeted for lysosomal degradation by multiple cytoplasmic dileucine motifs.</title>
        <authorList>
            <person name="Jelcic I."/>
            <person name="Reichel J."/>
            <person name="Schlude C."/>
            <person name="Treutler E."/>
            <person name="Sinzger C."/>
            <person name="Steinle A."/>
        </authorList>
    </citation>
    <scope>SUBCELLULAR LOCATION</scope>
</reference>
<accession>P16758</accession>
<accession>Q7M6R2</accession>
<keyword id="KW-0325">Glycoprotein</keyword>
<keyword id="KW-1038">Host endoplasmic reticulum</keyword>
<keyword id="KW-1043">Host membrane</keyword>
<keyword id="KW-0472">Membrane</keyword>
<keyword id="KW-1185">Reference proteome</keyword>
<keyword id="KW-0732">Signal</keyword>
<keyword id="KW-0812">Transmembrane</keyword>
<keyword id="KW-1133">Transmembrane helix</keyword>